<dbReference type="EC" id="1.5.1.42" evidence="2 7"/>
<dbReference type="EMBL" id="DQ444326">
    <property type="protein sequence ID" value="ABE26647.1"/>
    <property type="molecule type" value="Genomic_DNA"/>
</dbReference>
<dbReference type="RefSeq" id="WP_003941189.1">
    <property type="nucleotide sequence ID" value="NZ_WIDN01000057.1"/>
</dbReference>
<dbReference type="SMR" id="P0DW80"/>
<dbReference type="GeneID" id="64138614"/>
<dbReference type="OMA" id="EMFRRHA"/>
<dbReference type="OrthoDB" id="9792858at2"/>
<dbReference type="UniPathway" id="UPA00346"/>
<dbReference type="GO" id="GO:0005737">
    <property type="term" value="C:cytoplasm"/>
    <property type="evidence" value="ECO:0007669"/>
    <property type="project" value="UniProtKB-SubCell"/>
</dbReference>
<dbReference type="GO" id="GO:0010181">
    <property type="term" value="F:FMN binding"/>
    <property type="evidence" value="ECO:0007669"/>
    <property type="project" value="InterPro"/>
</dbReference>
<dbReference type="GO" id="GO:0042602">
    <property type="term" value="F:riboflavin reductase (NADPH) activity"/>
    <property type="evidence" value="ECO:0007669"/>
    <property type="project" value="TreeGrafter"/>
</dbReference>
<dbReference type="GO" id="GO:0018896">
    <property type="term" value="P:dibenzothiophene catabolic process"/>
    <property type="evidence" value="ECO:0007669"/>
    <property type="project" value="UniProtKB-UniPathway"/>
</dbReference>
<dbReference type="GO" id="GO:0006208">
    <property type="term" value="P:pyrimidine nucleobase catabolic process"/>
    <property type="evidence" value="ECO:0007669"/>
    <property type="project" value="TreeGrafter"/>
</dbReference>
<dbReference type="Gene3D" id="2.30.110.10">
    <property type="entry name" value="Electron Transport, Fmn-binding Protein, Chain A"/>
    <property type="match status" value="1"/>
</dbReference>
<dbReference type="InterPro" id="IPR002563">
    <property type="entry name" value="Flavin_Rdtase-like_dom"/>
</dbReference>
<dbReference type="InterPro" id="IPR050268">
    <property type="entry name" value="NADH-dep_flavin_reductase"/>
</dbReference>
<dbReference type="InterPro" id="IPR012349">
    <property type="entry name" value="Split_barrel_FMN-bd"/>
</dbReference>
<dbReference type="PANTHER" id="PTHR30466">
    <property type="entry name" value="FLAVIN REDUCTASE"/>
    <property type="match status" value="1"/>
</dbReference>
<dbReference type="PANTHER" id="PTHR30466:SF1">
    <property type="entry name" value="FMN REDUCTASE (NADH) RUTF"/>
    <property type="match status" value="1"/>
</dbReference>
<dbReference type="Pfam" id="PF01613">
    <property type="entry name" value="Flavin_Reduct"/>
    <property type="match status" value="1"/>
</dbReference>
<dbReference type="SMART" id="SM00903">
    <property type="entry name" value="Flavin_Reduct"/>
    <property type="match status" value="1"/>
</dbReference>
<dbReference type="SUPFAM" id="SSF50475">
    <property type="entry name" value="FMN-binding split barrel"/>
    <property type="match status" value="1"/>
</dbReference>
<sequence length="192" mass="20515">MSDKPNAVSSHTTPDVPEVAATPELSTGICAGDYRAALRRHPAGVTVVTLDSGTGPVGFTATSFSSVSLEPPLVSFNIAETSSSINALKAAESLVIHLLGEHQQHLAQRFARSADQRFADESLWAVLDTGEPVLHGTPSWMRVKVDQLIPVGDHTLVIGLVTRVHAEEDDESAAAPLLYHEGKYYRPTPLGQ</sequence>
<reference key="1">
    <citation type="journal article" date="2006" name="Biotechnol. Lett.">
        <title>Desulfurization of dibenzothiophene by Bacillus subtilis recombinants carrying dszABC and dszD genes.</title>
        <authorList>
            <person name="Ma T."/>
            <person name="Li G."/>
            <person name="Li J."/>
            <person name="Liang F."/>
            <person name="Liu R."/>
        </authorList>
    </citation>
    <scope>NUCLEOTIDE SEQUENCE [GENOMIC DNA]</scope>
    <scope>PROBABLE FUNCTION</scope>
    <scope>PATHWAY</scope>
    <scope>EXPRESSION IN B.SUBTILIS</scope>
    <scope>INDUCTION</scope>
    <scope>BIOTECHNOLOGY</scope>
    <source>
        <strain>DS-3</strain>
    </source>
</reference>
<feature type="chain" id="PRO_0000455402" description="NADH:FMN oxidoreductase">
    <location>
        <begin position="1"/>
        <end position="192"/>
    </location>
</feature>
<feature type="region of interest" description="Disordered" evidence="3">
    <location>
        <begin position="1"/>
        <end position="20"/>
    </location>
</feature>
<feature type="binding site" evidence="1">
    <location>
        <begin position="60"/>
        <end position="63"/>
    </location>
    <ligand>
        <name>FMN</name>
        <dbReference type="ChEBI" id="CHEBI:58210"/>
    </ligand>
</feature>
<feature type="binding site" evidence="1">
    <location>
        <begin position="77"/>
        <end position="84"/>
    </location>
    <ligand>
        <name>FMN</name>
        <dbReference type="ChEBI" id="CHEBI:58210"/>
    </ligand>
</feature>
<feature type="binding site" evidence="1">
    <location>
        <position position="111"/>
    </location>
    <ligand>
        <name>FMN</name>
        <dbReference type="ChEBI" id="CHEBI:58210"/>
    </ligand>
</feature>
<feature type="binding site" evidence="1">
    <location>
        <position position="117"/>
    </location>
    <ligand>
        <name>FMN</name>
        <dbReference type="ChEBI" id="CHEBI:58210"/>
    </ligand>
</feature>
<name>DSZD_RHOER</name>
<comment type="function">
    <text evidence="2 7">An NADH:FMN oxidoreductase which supplies reduced FMN for the '4S' desulfurization pathway that removes covalently bound sulfur from dibenzothiophene (DBT) without breaking carbon-carbon bonds. Provides DszA and DszC (DBTO2-monooxygenase and DBT-monooxygenase respectively) with reduced flavin (FMN).</text>
</comment>
<comment type="catalytic activity">
    <reaction evidence="2">
        <text>FMNH2 + NAD(+) = FMN + NADH + 2 H(+)</text>
        <dbReference type="Rhea" id="RHEA:21620"/>
        <dbReference type="ChEBI" id="CHEBI:15378"/>
        <dbReference type="ChEBI" id="CHEBI:57540"/>
        <dbReference type="ChEBI" id="CHEBI:57618"/>
        <dbReference type="ChEBI" id="CHEBI:57945"/>
        <dbReference type="ChEBI" id="CHEBI:58210"/>
        <dbReference type="EC" id="1.5.1.42"/>
    </reaction>
</comment>
<comment type="pathway">
    <text evidence="4">Sulfur metabolism; dibenzothiophene degradation.</text>
</comment>
<comment type="subcellular location">
    <subcellularLocation>
        <location evidence="6">Cytoplasm</location>
    </subcellularLocation>
</comment>
<comment type="induction">
    <text evidence="7">Repressed by HBP or sulfate.</text>
</comment>
<comment type="biotechnology">
    <text evidence="4">Expression in B.subtilis confers the ability to remove sulfur from polycyclic aromatic sulfur compounds found in gasoline and diesel (biodesulfurization), which are a considerable source of pollution.</text>
</comment>
<comment type="similarity">
    <text evidence="6">Belongs to the non-flavoprotein flavin reductase family.</text>
</comment>
<proteinExistence type="evidence at protein level"/>
<keyword id="KW-0963">Cytoplasm</keyword>
<keyword id="KW-0285">Flavoprotein</keyword>
<keyword id="KW-0288">FMN</keyword>
<keyword id="KW-0547">Nucleotide-binding</keyword>
<keyword id="KW-0560">Oxidoreductase</keyword>
<evidence type="ECO:0000250" key="1">
    <source>
        <dbReference type="UniProtKB" id="B6CDL6"/>
    </source>
</evidence>
<evidence type="ECO:0000250" key="2">
    <source>
        <dbReference type="UniProtKB" id="O68503"/>
    </source>
</evidence>
<evidence type="ECO:0000256" key="3">
    <source>
        <dbReference type="SAM" id="MobiDB-lite"/>
    </source>
</evidence>
<evidence type="ECO:0000269" key="4">
    <source>
    </source>
</evidence>
<evidence type="ECO:0000303" key="5">
    <source>
    </source>
</evidence>
<evidence type="ECO:0000305" key="6"/>
<evidence type="ECO:0000305" key="7">
    <source>
    </source>
</evidence>
<organism>
    <name type="scientific">Rhodococcus erythropolis</name>
    <name type="common">Arthrobacter picolinophilus</name>
    <dbReference type="NCBI Taxonomy" id="1833"/>
    <lineage>
        <taxon>Bacteria</taxon>
        <taxon>Bacillati</taxon>
        <taxon>Actinomycetota</taxon>
        <taxon>Actinomycetes</taxon>
        <taxon>Mycobacteriales</taxon>
        <taxon>Nocardiaceae</taxon>
        <taxon>Rhodococcus</taxon>
        <taxon>Rhodococcus erythropolis group</taxon>
    </lineage>
</organism>
<gene>
    <name evidence="5" type="primary">dszD</name>
</gene>
<accession>P0DW80</accession>
<protein>
    <recommendedName>
        <fullName>NADH:FMN oxidoreductase</fullName>
        <ecNumber evidence="2 7">1.5.1.42</ecNumber>
    </recommendedName>
    <alternativeName>
        <fullName>FMN reductase</fullName>
    </alternativeName>
</protein>